<accession>O74506</accession>
<dbReference type="EMBL" id="CU329672">
    <property type="protein sequence ID" value="CAA20662.1"/>
    <property type="molecule type" value="Genomic_DNA"/>
</dbReference>
<dbReference type="PIR" id="T41447">
    <property type="entry name" value="T41447"/>
</dbReference>
<dbReference type="RefSeq" id="NP_587789.1">
    <property type="nucleotide sequence ID" value="NM_001022782.2"/>
</dbReference>
<dbReference type="SMR" id="O74506"/>
<dbReference type="PaxDb" id="4896-SPCC594.03.1"/>
<dbReference type="EnsemblFungi" id="SPCC594.03.1">
    <property type="protein sequence ID" value="SPCC594.03.1:pep"/>
    <property type="gene ID" value="SPCC594.03"/>
</dbReference>
<dbReference type="KEGG" id="spo:2538819"/>
<dbReference type="PomBase" id="SPCC594.03"/>
<dbReference type="VEuPathDB" id="FungiDB:SPCC594.03"/>
<dbReference type="HOGENOM" id="CLU_2198516_0_0_1"/>
<dbReference type="InParanoid" id="O74506"/>
<dbReference type="PRO" id="PR:O74506"/>
<dbReference type="Proteomes" id="UP000002485">
    <property type="component" value="Chromosome III"/>
</dbReference>
<keyword id="KW-1185">Reference proteome</keyword>
<name>YJD3_SCHPO</name>
<sequence>MWVTCHLLKREKDEMKKKWREWAKEVCQFGKRILCISITDAALVNLEVLEPKNFEPGTLDGAGLFGCWSANGLGIALAYEITNSRFEINSGYTVKVKCLKRFQGEARG</sequence>
<organism>
    <name type="scientific">Schizosaccharomyces pombe (strain 972 / ATCC 24843)</name>
    <name type="common">Fission yeast</name>
    <dbReference type="NCBI Taxonomy" id="284812"/>
    <lineage>
        <taxon>Eukaryota</taxon>
        <taxon>Fungi</taxon>
        <taxon>Dikarya</taxon>
        <taxon>Ascomycota</taxon>
        <taxon>Taphrinomycotina</taxon>
        <taxon>Schizosaccharomycetes</taxon>
        <taxon>Schizosaccharomycetales</taxon>
        <taxon>Schizosaccharomycetaceae</taxon>
        <taxon>Schizosaccharomyces</taxon>
    </lineage>
</organism>
<proteinExistence type="predicted"/>
<feature type="chain" id="PRO_0000116813" description="Uncharacterized protein C594.03">
    <location>
        <begin position="1"/>
        <end position="108"/>
    </location>
</feature>
<protein>
    <recommendedName>
        <fullName>Uncharacterized protein C594.03</fullName>
    </recommendedName>
</protein>
<reference key="1">
    <citation type="journal article" date="2002" name="Nature">
        <title>The genome sequence of Schizosaccharomyces pombe.</title>
        <authorList>
            <person name="Wood V."/>
            <person name="Gwilliam R."/>
            <person name="Rajandream M.A."/>
            <person name="Lyne M.H."/>
            <person name="Lyne R."/>
            <person name="Stewart A."/>
            <person name="Sgouros J.G."/>
            <person name="Peat N."/>
            <person name="Hayles J."/>
            <person name="Baker S.G."/>
            <person name="Basham D."/>
            <person name="Bowman S."/>
            <person name="Brooks K."/>
            <person name="Brown D."/>
            <person name="Brown S."/>
            <person name="Chillingworth T."/>
            <person name="Churcher C.M."/>
            <person name="Collins M."/>
            <person name="Connor R."/>
            <person name="Cronin A."/>
            <person name="Davis P."/>
            <person name="Feltwell T."/>
            <person name="Fraser A."/>
            <person name="Gentles S."/>
            <person name="Goble A."/>
            <person name="Hamlin N."/>
            <person name="Harris D.E."/>
            <person name="Hidalgo J."/>
            <person name="Hodgson G."/>
            <person name="Holroyd S."/>
            <person name="Hornsby T."/>
            <person name="Howarth S."/>
            <person name="Huckle E.J."/>
            <person name="Hunt S."/>
            <person name="Jagels K."/>
            <person name="James K.D."/>
            <person name="Jones L."/>
            <person name="Jones M."/>
            <person name="Leather S."/>
            <person name="McDonald S."/>
            <person name="McLean J."/>
            <person name="Mooney P."/>
            <person name="Moule S."/>
            <person name="Mungall K.L."/>
            <person name="Murphy L.D."/>
            <person name="Niblett D."/>
            <person name="Odell C."/>
            <person name="Oliver K."/>
            <person name="O'Neil S."/>
            <person name="Pearson D."/>
            <person name="Quail M.A."/>
            <person name="Rabbinowitsch E."/>
            <person name="Rutherford K.M."/>
            <person name="Rutter S."/>
            <person name="Saunders D."/>
            <person name="Seeger K."/>
            <person name="Sharp S."/>
            <person name="Skelton J."/>
            <person name="Simmonds M.N."/>
            <person name="Squares R."/>
            <person name="Squares S."/>
            <person name="Stevens K."/>
            <person name="Taylor K."/>
            <person name="Taylor R.G."/>
            <person name="Tivey A."/>
            <person name="Walsh S.V."/>
            <person name="Warren T."/>
            <person name="Whitehead S."/>
            <person name="Woodward J.R."/>
            <person name="Volckaert G."/>
            <person name="Aert R."/>
            <person name="Robben J."/>
            <person name="Grymonprez B."/>
            <person name="Weltjens I."/>
            <person name="Vanstreels E."/>
            <person name="Rieger M."/>
            <person name="Schaefer M."/>
            <person name="Mueller-Auer S."/>
            <person name="Gabel C."/>
            <person name="Fuchs M."/>
            <person name="Duesterhoeft A."/>
            <person name="Fritzc C."/>
            <person name="Holzer E."/>
            <person name="Moestl D."/>
            <person name="Hilbert H."/>
            <person name="Borzym K."/>
            <person name="Langer I."/>
            <person name="Beck A."/>
            <person name="Lehrach H."/>
            <person name="Reinhardt R."/>
            <person name="Pohl T.M."/>
            <person name="Eger P."/>
            <person name="Zimmermann W."/>
            <person name="Wedler H."/>
            <person name="Wambutt R."/>
            <person name="Purnelle B."/>
            <person name="Goffeau A."/>
            <person name="Cadieu E."/>
            <person name="Dreano S."/>
            <person name="Gloux S."/>
            <person name="Lelaure V."/>
            <person name="Mottier S."/>
            <person name="Galibert F."/>
            <person name="Aves S.J."/>
            <person name="Xiang Z."/>
            <person name="Hunt C."/>
            <person name="Moore K."/>
            <person name="Hurst S.M."/>
            <person name="Lucas M."/>
            <person name="Rochet M."/>
            <person name="Gaillardin C."/>
            <person name="Tallada V.A."/>
            <person name="Garzon A."/>
            <person name="Thode G."/>
            <person name="Daga R.R."/>
            <person name="Cruzado L."/>
            <person name="Jimenez J."/>
            <person name="Sanchez M."/>
            <person name="del Rey F."/>
            <person name="Benito J."/>
            <person name="Dominguez A."/>
            <person name="Revuelta J.L."/>
            <person name="Moreno S."/>
            <person name="Armstrong J."/>
            <person name="Forsburg S.L."/>
            <person name="Cerutti L."/>
            <person name="Lowe T."/>
            <person name="McCombie W.R."/>
            <person name="Paulsen I."/>
            <person name="Potashkin J."/>
            <person name="Shpakovski G.V."/>
            <person name="Ussery D."/>
            <person name="Barrell B.G."/>
            <person name="Nurse P."/>
        </authorList>
    </citation>
    <scope>NUCLEOTIDE SEQUENCE [LARGE SCALE GENOMIC DNA]</scope>
    <source>
        <strain>972 / ATCC 24843</strain>
    </source>
</reference>
<gene>
    <name type="ORF">SPCC594.03</name>
</gene>